<sequence length="371" mass="43038">MTPEQKAKLEANRKLAIERLRKRGILSSDQLNRIESRNEPLKTRPLAVTSGSNRDDNAAAAVHVPNHNGQPSALANTNTNTTSLYGSGVVDGSKRDASVLDKRPTDRIRPSIRKQDYIEYDFATMQNLNGGYINPKDKLPNSDFTDDQEFESEFGSKKQKTLQDWKKEQLERKMLYENAPPPEHISKAPKCIECHINIEMDPVLHDVFKLQVCKQCSKEHPEKYALLTKTECKEDYFLTDPELNDEDLFHRLEKPNPHSGTFARMQLFVRCEVEAFAFKKWGGEEGLDEEWQRREEGKAHRREKKYEKKIKEMRLKTRAQEYTNRLREKKHGKAHIHHFSDPVDGGIDEDGYQIQRRRCTDCGLETEEIDI</sequence>
<proteinExistence type="evidence at protein level"/>
<reference key="1">
    <citation type="journal article" date="1997" name="Yeast">
        <title>Characterization of the rad14-2 mutant of Saccharomyces cerevisiae: implications for the recognition of UV photoproducts by the Rad14 protein.</title>
        <authorList>
            <person name="Jones G.W."/>
            <person name="Reed S.H."/>
            <person name="Waters R."/>
        </authorList>
    </citation>
    <scope>NUCLEOTIDE SEQUENCE [GENOMIC DNA]</scope>
    <scope>MUTANT RAD14-2</scope>
</reference>
<reference key="2">
    <citation type="journal article" date="1992" name="Nature">
        <title>Yeast RAD14 and human Xeroderma pigmentosum group A DNA-repair genes encode homologous proteins.</title>
        <authorList>
            <person name="Bankmann M."/>
            <person name="Prakash L."/>
            <person name="Prakash S."/>
        </authorList>
    </citation>
    <scope>NUCLEOTIDE SEQUENCE [GENOMIC DNA] OF 125-371</scope>
</reference>
<reference key="3">
    <citation type="journal article" date="1997" name="Nature">
        <title>The nucleotide sequence of Saccharomyces cerevisiae chromosome XIII.</title>
        <authorList>
            <person name="Bowman S."/>
            <person name="Churcher C.M."/>
            <person name="Badcock K."/>
            <person name="Brown D."/>
            <person name="Chillingworth T."/>
            <person name="Connor R."/>
            <person name="Dedman K."/>
            <person name="Devlin K."/>
            <person name="Gentles S."/>
            <person name="Hamlin N."/>
            <person name="Hunt S."/>
            <person name="Jagels K."/>
            <person name="Lye G."/>
            <person name="Moule S."/>
            <person name="Odell C."/>
            <person name="Pearson D."/>
            <person name="Rajandream M.A."/>
            <person name="Rice P."/>
            <person name="Skelton J."/>
            <person name="Walsh S.V."/>
            <person name="Whitehead S."/>
            <person name="Barrell B.G."/>
        </authorList>
    </citation>
    <scope>NUCLEOTIDE SEQUENCE [LARGE SCALE GENOMIC DNA]</scope>
    <source>
        <strain>ATCC 204508 / S288c</strain>
    </source>
</reference>
<reference key="4">
    <citation type="journal article" date="2014" name="G3 (Bethesda)">
        <title>The reference genome sequence of Saccharomyces cerevisiae: Then and now.</title>
        <authorList>
            <person name="Engel S.R."/>
            <person name="Dietrich F.S."/>
            <person name="Fisk D.G."/>
            <person name="Binkley G."/>
            <person name="Balakrishnan R."/>
            <person name="Costanzo M.C."/>
            <person name="Dwight S.S."/>
            <person name="Hitz B.C."/>
            <person name="Karra K."/>
            <person name="Nash R.S."/>
            <person name="Weng S."/>
            <person name="Wong E.D."/>
            <person name="Lloyd P."/>
            <person name="Skrzypek M.S."/>
            <person name="Miyasato S.R."/>
            <person name="Simison M."/>
            <person name="Cherry J.M."/>
        </authorList>
    </citation>
    <scope>GENOME REANNOTATION</scope>
    <source>
        <strain>ATCC 204508 / S288c</strain>
    </source>
</reference>
<reference key="5">
    <citation type="journal article" date="1993" name="Proc. Natl. Acad. Sci. U.S.A.">
        <title>Yeast DNA-repair gene RAD14 encodes a zinc metalloprotein with affinity for ultraviolet-damaged DNA.</title>
        <authorList>
            <person name="Guzder S.N."/>
            <person name="Sung P."/>
            <person name="Prakash L."/>
            <person name="Prakash S."/>
        </authorList>
    </citation>
    <scope>CHARACTERIZATION</scope>
</reference>
<reference key="6">
    <citation type="journal article" date="1996" name="J. Biol. Chem.">
        <title>Nucleotide excision repair in yeast is mediated by sequential assembly of repair factors and not by a pre-assembled repairosome.</title>
        <authorList>
            <person name="Guzder S.N."/>
            <person name="Sung P."/>
            <person name="Prakash L."/>
            <person name="Prakash S."/>
        </authorList>
    </citation>
    <scope>IDENTIFICATION IN THE NEF1 COMPLEX</scope>
</reference>
<reference key="7">
    <citation type="journal article" date="2003" name="Nature">
        <title>Global analysis of protein expression in yeast.</title>
        <authorList>
            <person name="Ghaemmaghami S."/>
            <person name="Huh W.-K."/>
            <person name="Bower K."/>
            <person name="Howson R.W."/>
            <person name="Belle A."/>
            <person name="Dephoure N."/>
            <person name="O'Shea E.K."/>
            <person name="Weissman J.S."/>
        </authorList>
    </citation>
    <scope>LEVEL OF PROTEIN EXPRESSION [LARGE SCALE ANALYSIS]</scope>
</reference>
<reference key="8">
    <citation type="journal article" date="2012" name="Proc. Natl. Acad. Sci. U.S.A.">
        <title>N-terminal acetylome analyses and functional insights of the N-terminal acetyltransferase NatB.</title>
        <authorList>
            <person name="Van Damme P."/>
            <person name="Lasa M."/>
            <person name="Polevoda B."/>
            <person name="Gazquez C."/>
            <person name="Elosegui-Artola A."/>
            <person name="Kim D.S."/>
            <person name="De Juan-Pardo E."/>
            <person name="Demeyer K."/>
            <person name="Hole K."/>
            <person name="Larrea E."/>
            <person name="Timmerman E."/>
            <person name="Prieto J."/>
            <person name="Arnesen T."/>
            <person name="Sherman F."/>
            <person name="Gevaert K."/>
            <person name="Aldabe R."/>
        </authorList>
    </citation>
    <scope>IDENTIFICATION BY MASS SPECTROMETRY [LARGE SCALE ANALYSIS]</scope>
</reference>
<reference evidence="7 8" key="9">
    <citation type="journal article" date="2015" name="Proc. Natl. Acad. Sci. U.S.A.">
        <title>Structural insights into the recognition of cisplatin and AAF-dG lesion by Rad14 (XPA).</title>
        <authorList>
            <person name="Koch S.C."/>
            <person name="Kuper J."/>
            <person name="Gasteiger K.L."/>
            <person name="Simon N."/>
            <person name="Strasser R."/>
            <person name="Eisen D."/>
            <person name="Geiger S."/>
            <person name="Schneider S."/>
            <person name="Kisker C."/>
            <person name="Carell T."/>
        </authorList>
    </citation>
    <scope>X-RAY CRYSTALLOGRAPHY (1.80 ANGSTROMS) OF 188-302 IN COMPLEX WITH DAMAGED DNA AND ZN(2+)</scope>
    <scope>SUBUNIT</scope>
    <scope>DNA-BINDING</scope>
</reference>
<comment type="function">
    <text>Involved in nucleotide excision repair. Binds specifically to damaged DNA. Required for the incision step.</text>
</comment>
<comment type="subunit">
    <text evidence="3 4">Two monomers bind to kinked/damaged DNA (construct with only the C-terminal DNA-binding domain) (PubMed:26100901). Component of the nucleotide excision repair factor 1 (NEF1) complex consisting of RAD1, RAD10 and RAD14.</text>
</comment>
<comment type="interaction">
    <interactant intactId="EBI-14641">
        <id>P28519</id>
    </interactant>
    <interactant intactId="EBI-14752">
        <id>P06777</id>
        <label>RAD1</label>
    </interactant>
    <organismsDiffer>false</organismsDiffer>
    <experiments>4</experiments>
</comment>
<comment type="subcellular location">
    <subcellularLocation>
        <location>Nucleus</location>
    </subcellularLocation>
</comment>
<comment type="miscellaneous">
    <text evidence="2">Present with 1030 molecules/cell in log phase SD medium.</text>
</comment>
<comment type="similarity">
    <text evidence="5">Belongs to the XPA family.</text>
</comment>
<keyword id="KW-0002">3D-structure</keyword>
<keyword id="KW-0227">DNA damage</keyword>
<keyword id="KW-0234">DNA repair</keyword>
<keyword id="KW-0238">DNA-binding</keyword>
<keyword id="KW-0479">Metal-binding</keyword>
<keyword id="KW-0539">Nucleus</keyword>
<keyword id="KW-1185">Reference proteome</keyword>
<keyword id="KW-0862">Zinc</keyword>
<keyword id="KW-0863">Zinc-finger</keyword>
<accession>P28519</accession>
<accession>D6W026</accession>
<organism>
    <name type="scientific">Saccharomyces cerevisiae (strain ATCC 204508 / S288c)</name>
    <name type="common">Baker's yeast</name>
    <dbReference type="NCBI Taxonomy" id="559292"/>
    <lineage>
        <taxon>Eukaryota</taxon>
        <taxon>Fungi</taxon>
        <taxon>Dikarya</taxon>
        <taxon>Ascomycota</taxon>
        <taxon>Saccharomycotina</taxon>
        <taxon>Saccharomycetes</taxon>
        <taxon>Saccharomycetales</taxon>
        <taxon>Saccharomycetaceae</taxon>
        <taxon>Saccharomyces</taxon>
    </lineage>
</organism>
<feature type="chain" id="PRO_0000208654" description="DNA repair protein RAD14">
    <location>
        <begin position="1"/>
        <end position="371"/>
    </location>
</feature>
<feature type="zinc finger region" evidence="6">
    <location>
        <begin position="191"/>
        <end position="216"/>
    </location>
</feature>
<feature type="region of interest" description="Disordered" evidence="1">
    <location>
        <begin position="26"/>
        <end position="48"/>
    </location>
</feature>
<feature type="compositionally biased region" description="Basic and acidic residues" evidence="1">
    <location>
        <begin position="32"/>
        <end position="42"/>
    </location>
</feature>
<feature type="binding site" evidence="3">
    <location>
        <position position="191"/>
    </location>
    <ligand>
        <name>Zn(2+)</name>
        <dbReference type="ChEBI" id="CHEBI:29105"/>
    </ligand>
</feature>
<feature type="binding site" evidence="3">
    <location>
        <position position="194"/>
    </location>
    <ligand>
        <name>Zn(2+)</name>
        <dbReference type="ChEBI" id="CHEBI:29105"/>
    </ligand>
</feature>
<feature type="binding site" evidence="3">
    <location>
        <position position="213"/>
    </location>
    <ligand>
        <name>Zn(2+)</name>
        <dbReference type="ChEBI" id="CHEBI:29105"/>
    </ligand>
</feature>
<feature type="binding site" evidence="3">
    <location>
        <position position="216"/>
    </location>
    <ligand>
        <name>Zn(2+)</name>
        <dbReference type="ChEBI" id="CHEBI:29105"/>
    </ligand>
</feature>
<feature type="mutagenesis site" description="In RAD14-2; loss of recognition of cyclobutane pyrimidine dimers.">
    <original>V</original>
    <variation>M</variation>
    <location>
        <position position="207"/>
    </location>
</feature>
<feature type="mutagenesis site" description="In RAD14-2; loss of recognition of cyclobutane pyrimidine dimers.">
    <original>C</original>
    <variation>Y</variation>
    <location>
        <position position="216"/>
    </location>
</feature>
<feature type="turn" evidence="9">
    <location>
        <begin position="192"/>
        <end position="194"/>
    </location>
</feature>
<feature type="helix" evidence="9">
    <location>
        <begin position="202"/>
        <end position="206"/>
    </location>
</feature>
<feature type="helix" evidence="9">
    <location>
        <begin position="214"/>
        <end position="219"/>
    </location>
</feature>
<feature type="helix" evidence="9">
    <location>
        <begin position="221"/>
        <end position="224"/>
    </location>
</feature>
<feature type="strand" evidence="9">
    <location>
        <begin position="226"/>
        <end position="228"/>
    </location>
</feature>
<feature type="helix" evidence="9">
    <location>
        <begin position="229"/>
        <end position="236"/>
    </location>
</feature>
<feature type="helix" evidence="9">
    <location>
        <begin position="240"/>
        <end position="243"/>
    </location>
</feature>
<feature type="turn" evidence="9">
    <location>
        <begin position="246"/>
        <end position="248"/>
    </location>
</feature>
<feature type="strand" evidence="9">
    <location>
        <begin position="252"/>
        <end position="254"/>
    </location>
</feature>
<feature type="strand" evidence="9">
    <location>
        <begin position="265"/>
        <end position="269"/>
    </location>
</feature>
<feature type="helix" evidence="9">
    <location>
        <begin position="270"/>
        <end position="281"/>
    </location>
</feature>
<feature type="helix" evidence="9">
    <location>
        <begin position="283"/>
        <end position="300"/>
    </location>
</feature>
<name>RAD14_YEAST</name>
<gene>
    <name type="primary">RAD14</name>
    <name type="ordered locus">YMR201C</name>
    <name type="ORF">YM8325.02C</name>
</gene>
<dbReference type="EMBL" id="X64064">
    <property type="protein sequence ID" value="CAA45420.1"/>
    <property type="molecule type" value="Genomic_DNA"/>
</dbReference>
<dbReference type="EMBL" id="Z48755">
    <property type="protein sequence ID" value="CAA88642.1"/>
    <property type="molecule type" value="Genomic_DNA"/>
</dbReference>
<dbReference type="EMBL" id="BK006946">
    <property type="protein sequence ID" value="DAA10100.1"/>
    <property type="molecule type" value="Genomic_DNA"/>
</dbReference>
<dbReference type="PIR" id="S59442">
    <property type="entry name" value="S59442"/>
</dbReference>
<dbReference type="RefSeq" id="NP_013928.1">
    <property type="nucleotide sequence ID" value="NM_001182708.1"/>
</dbReference>
<dbReference type="PDB" id="5A39">
    <property type="method" value="X-ray"/>
    <property type="resolution" value="2.80 A"/>
    <property type="chains" value="A/B=188-302"/>
</dbReference>
<dbReference type="PDB" id="5A3D">
    <property type="method" value="X-ray"/>
    <property type="resolution" value="1.80 A"/>
    <property type="chains" value="A/B=188-302"/>
</dbReference>
<dbReference type="PDB" id="5G32">
    <property type="method" value="X-ray"/>
    <property type="resolution" value="2.20 A"/>
    <property type="chains" value="A/B=188-306"/>
</dbReference>
<dbReference type="PDB" id="5G33">
    <property type="method" value="X-ray"/>
    <property type="resolution" value="2.40 A"/>
    <property type="chains" value="A/B=188-306"/>
</dbReference>
<dbReference type="PDB" id="5G34">
    <property type="method" value="X-ray"/>
    <property type="resolution" value="1.90 A"/>
    <property type="chains" value="A/B=188-306"/>
</dbReference>
<dbReference type="PDB" id="5G35">
    <property type="method" value="X-ray"/>
    <property type="resolution" value="2.00 A"/>
    <property type="chains" value="A/B=188-306"/>
</dbReference>
<dbReference type="PDB" id="5LCL">
    <property type="method" value="X-ray"/>
    <property type="resolution" value="2.20 A"/>
    <property type="chains" value="A=188-306, B=1-371"/>
</dbReference>
<dbReference type="PDB" id="5LCM">
    <property type="method" value="X-ray"/>
    <property type="resolution" value="1.90 A"/>
    <property type="chains" value="A/B=188-306"/>
</dbReference>
<dbReference type="PDBsum" id="5A39"/>
<dbReference type="PDBsum" id="5A3D"/>
<dbReference type="PDBsum" id="5G32"/>
<dbReference type="PDBsum" id="5G33"/>
<dbReference type="PDBsum" id="5G34"/>
<dbReference type="PDBsum" id="5G35"/>
<dbReference type="PDBsum" id="5LCL"/>
<dbReference type="PDBsum" id="5LCM"/>
<dbReference type="SMR" id="P28519"/>
<dbReference type="BioGRID" id="35379">
    <property type="interactions" value="400"/>
</dbReference>
<dbReference type="ComplexPortal" id="CPX-1708">
    <property type="entry name" value="Nucleotide-excision repair factor 1 complex"/>
</dbReference>
<dbReference type="DIP" id="DIP-1896N"/>
<dbReference type="ELM" id="P28519"/>
<dbReference type="FunCoup" id="P28519">
    <property type="interactions" value="120"/>
</dbReference>
<dbReference type="IntAct" id="P28519">
    <property type="interactions" value="10"/>
</dbReference>
<dbReference type="MINT" id="P28519"/>
<dbReference type="STRING" id="4932.YMR201C"/>
<dbReference type="iPTMnet" id="P28519"/>
<dbReference type="PaxDb" id="4932-YMR201C"/>
<dbReference type="PeptideAtlas" id="P28519"/>
<dbReference type="EnsemblFungi" id="YMR201C_mRNA">
    <property type="protein sequence ID" value="YMR201C"/>
    <property type="gene ID" value="YMR201C"/>
</dbReference>
<dbReference type="GeneID" id="855241"/>
<dbReference type="KEGG" id="sce:YMR201C"/>
<dbReference type="AGR" id="SGD:S000004814"/>
<dbReference type="SGD" id="S000004814">
    <property type="gene designation" value="RAD14"/>
</dbReference>
<dbReference type="VEuPathDB" id="FungiDB:YMR201C"/>
<dbReference type="eggNOG" id="KOG4017">
    <property type="taxonomic scope" value="Eukaryota"/>
</dbReference>
<dbReference type="GeneTree" id="ENSGT00390000002721"/>
<dbReference type="HOGENOM" id="CLU_053731_0_1_1"/>
<dbReference type="InParanoid" id="P28519"/>
<dbReference type="OMA" id="VCHACKE"/>
<dbReference type="OrthoDB" id="5368863at2759"/>
<dbReference type="BioCyc" id="YEAST:G3O-32888-MONOMER"/>
<dbReference type="Reactome" id="R-SCE-6781823">
    <property type="pathway name" value="Formation of TC-NER Pre-Incision Complex"/>
</dbReference>
<dbReference type="Reactome" id="R-SCE-6782135">
    <property type="pathway name" value="Dual incision in TC-NER"/>
</dbReference>
<dbReference type="BioGRID-ORCS" id="855241">
    <property type="hits" value="0 hits in 10 CRISPR screens"/>
</dbReference>
<dbReference type="EvolutionaryTrace" id="P28519"/>
<dbReference type="PRO" id="PR:P28519"/>
<dbReference type="Proteomes" id="UP000002311">
    <property type="component" value="Chromosome XIII"/>
</dbReference>
<dbReference type="RNAct" id="P28519">
    <property type="molecule type" value="protein"/>
</dbReference>
<dbReference type="GO" id="GO:0000110">
    <property type="term" value="C:nucleotide-excision repair factor 1 complex"/>
    <property type="evidence" value="ECO:0000353"/>
    <property type="project" value="ComplexPortal"/>
</dbReference>
<dbReference type="GO" id="GO:0005634">
    <property type="term" value="C:nucleus"/>
    <property type="evidence" value="ECO:0000314"/>
    <property type="project" value="SGD"/>
</dbReference>
<dbReference type="GO" id="GO:0003684">
    <property type="term" value="F:damaged DNA binding"/>
    <property type="evidence" value="ECO:0000314"/>
    <property type="project" value="SGD"/>
</dbReference>
<dbReference type="GO" id="GO:0008270">
    <property type="term" value="F:zinc ion binding"/>
    <property type="evidence" value="ECO:0000314"/>
    <property type="project" value="SGD"/>
</dbReference>
<dbReference type="GO" id="GO:0006284">
    <property type="term" value="P:base-excision repair"/>
    <property type="evidence" value="ECO:0000318"/>
    <property type="project" value="GO_Central"/>
</dbReference>
<dbReference type="GO" id="GO:0006974">
    <property type="term" value="P:DNA damage response"/>
    <property type="evidence" value="ECO:0000314"/>
    <property type="project" value="SGD"/>
</dbReference>
<dbReference type="GO" id="GO:1901255">
    <property type="term" value="P:nucleotide-excision repair involved in interstrand cross-link repair"/>
    <property type="evidence" value="ECO:0000318"/>
    <property type="project" value="GO_Central"/>
</dbReference>
<dbReference type="GO" id="GO:0000715">
    <property type="term" value="P:nucleotide-excision repair, DNA damage recognition"/>
    <property type="evidence" value="ECO:0000314"/>
    <property type="project" value="SGD"/>
</dbReference>
<dbReference type="GO" id="GO:0070914">
    <property type="term" value="P:UV-damage excision repair"/>
    <property type="evidence" value="ECO:0000318"/>
    <property type="project" value="GO_Central"/>
</dbReference>
<dbReference type="CDD" id="cd21077">
    <property type="entry name" value="DBD_Rad14"/>
    <property type="match status" value="1"/>
</dbReference>
<dbReference type="FunFam" id="3.90.530.10:FF:000003">
    <property type="entry name" value="Dna repair rad14 protein"/>
    <property type="match status" value="1"/>
</dbReference>
<dbReference type="Gene3D" id="3.90.530.10">
    <property type="entry name" value="XPA C-terminal domain"/>
    <property type="match status" value="1"/>
</dbReference>
<dbReference type="InterPro" id="IPR009061">
    <property type="entry name" value="DNA-bd_dom_put_sf"/>
</dbReference>
<dbReference type="InterPro" id="IPR000465">
    <property type="entry name" value="XPA/RAD14"/>
</dbReference>
<dbReference type="InterPro" id="IPR022656">
    <property type="entry name" value="XPA_C"/>
</dbReference>
<dbReference type="InterPro" id="IPR022658">
    <property type="entry name" value="XPA_CS"/>
</dbReference>
<dbReference type="InterPro" id="IPR037129">
    <property type="entry name" value="XPA_sf"/>
</dbReference>
<dbReference type="InterPro" id="IPR022652">
    <property type="entry name" value="Znf_XPA_CS"/>
</dbReference>
<dbReference type="NCBIfam" id="TIGR00598">
    <property type="entry name" value="rad14"/>
    <property type="match status" value="1"/>
</dbReference>
<dbReference type="PANTHER" id="PTHR10142">
    <property type="entry name" value="DNA REPAIR PROTEIN COMPLEMENTING XP-A CELLS"/>
    <property type="match status" value="1"/>
</dbReference>
<dbReference type="PANTHER" id="PTHR10142:SF0">
    <property type="entry name" value="DNA REPAIR PROTEIN COMPLEMENTING XP-A CELLS"/>
    <property type="match status" value="1"/>
</dbReference>
<dbReference type="Pfam" id="PF05181">
    <property type="entry name" value="XPA_C"/>
    <property type="match status" value="1"/>
</dbReference>
<dbReference type="SUPFAM" id="SSF46955">
    <property type="entry name" value="Putative DNA-binding domain"/>
    <property type="match status" value="1"/>
</dbReference>
<dbReference type="PROSITE" id="PS00752">
    <property type="entry name" value="XPA_1"/>
    <property type="match status" value="1"/>
</dbReference>
<dbReference type="PROSITE" id="PS00753">
    <property type="entry name" value="XPA_2"/>
    <property type="match status" value="1"/>
</dbReference>
<protein>
    <recommendedName>
        <fullName>DNA repair protein RAD14</fullName>
    </recommendedName>
</protein>
<evidence type="ECO:0000256" key="1">
    <source>
        <dbReference type="SAM" id="MobiDB-lite"/>
    </source>
</evidence>
<evidence type="ECO:0000269" key="2">
    <source>
    </source>
</evidence>
<evidence type="ECO:0000269" key="3">
    <source>
    </source>
</evidence>
<evidence type="ECO:0000269" key="4">
    <source>
    </source>
</evidence>
<evidence type="ECO:0000305" key="5"/>
<evidence type="ECO:0000305" key="6">
    <source>
    </source>
</evidence>
<evidence type="ECO:0007744" key="7">
    <source>
        <dbReference type="PDB" id="5A39"/>
    </source>
</evidence>
<evidence type="ECO:0007744" key="8">
    <source>
        <dbReference type="PDB" id="5A3D"/>
    </source>
</evidence>
<evidence type="ECO:0007829" key="9">
    <source>
        <dbReference type="PDB" id="5A3D"/>
    </source>
</evidence>